<reference key="1">
    <citation type="submission" date="2007-03" db="EMBL/GenBank/DDBJ databases">
        <title>Sequencing analysis of Draba nemoroza chloroplast DNA.</title>
        <authorList>
            <person name="Hosouchi T."/>
            <person name="Tsuruoka H."/>
            <person name="Kotani H."/>
        </authorList>
    </citation>
    <scope>NUCLEOTIDE SEQUENCE [LARGE SCALE GENOMIC DNA]</scope>
</reference>
<sequence length="40" mass="4117">MADTTGRIPLWVIGTVAGILVIGLIGIFFYGSYSGLGSSL</sequence>
<proteinExistence type="inferred from homology"/>
<keyword id="KW-0150">Chloroplast</keyword>
<keyword id="KW-0472">Membrane</keyword>
<keyword id="KW-0602">Photosynthesis</keyword>
<keyword id="KW-0604">Photosystem II</keyword>
<keyword id="KW-0934">Plastid</keyword>
<keyword id="KW-0674">Reaction center</keyword>
<keyword id="KW-0793">Thylakoid</keyword>
<keyword id="KW-0812">Transmembrane</keyword>
<keyword id="KW-1133">Transmembrane helix</keyword>
<comment type="function">
    <text evidence="1">One of the components of the core complex of photosystem II (PSII). PSII is a light-driven water:plastoquinone oxidoreductase that uses light energy to abstract electrons from H(2)O, generating O(2) and a proton gradient subsequently used for ATP formation. It consists of a core antenna complex that captures photons, and an electron transfer chain that converts photonic excitation into a charge separation.</text>
</comment>
<comment type="subunit">
    <text evidence="1">PSII is composed of 1 copy each of membrane proteins PsbA, PsbB, PsbC, PsbD, PsbE, PsbF, PsbH, PsbI, PsbJ, PsbK, PsbL, PsbM, PsbT, PsbX, PsbY, PsbZ, Psb30/Ycf12, at least 3 peripheral proteins of the oxygen-evolving complex and a large number of cofactors. It forms dimeric complexes.</text>
</comment>
<comment type="subcellular location">
    <subcellularLocation>
        <location evidence="1">Plastid</location>
        <location evidence="1">Chloroplast thylakoid membrane</location>
        <topology evidence="1">Single-pass membrane protein</topology>
    </subcellularLocation>
</comment>
<comment type="similarity">
    <text evidence="1">Belongs to the PsbJ family.</text>
</comment>
<name>PSBJ_DRANE</name>
<evidence type="ECO:0000255" key="1">
    <source>
        <dbReference type="HAMAP-Rule" id="MF_01305"/>
    </source>
</evidence>
<geneLocation type="chloroplast"/>
<dbReference type="EMBL" id="AP009373">
    <property type="protein sequence ID" value="BAF50388.1"/>
    <property type="molecule type" value="Genomic_DNA"/>
</dbReference>
<dbReference type="RefSeq" id="YP_001123564.1">
    <property type="nucleotide sequence ID" value="NC_009272.1"/>
</dbReference>
<dbReference type="SMR" id="A4QL33"/>
<dbReference type="GeneID" id="4964730"/>
<dbReference type="GO" id="GO:0009535">
    <property type="term" value="C:chloroplast thylakoid membrane"/>
    <property type="evidence" value="ECO:0007669"/>
    <property type="project" value="UniProtKB-SubCell"/>
</dbReference>
<dbReference type="GO" id="GO:0009539">
    <property type="term" value="C:photosystem II reaction center"/>
    <property type="evidence" value="ECO:0007669"/>
    <property type="project" value="InterPro"/>
</dbReference>
<dbReference type="GO" id="GO:0015979">
    <property type="term" value="P:photosynthesis"/>
    <property type="evidence" value="ECO:0007669"/>
    <property type="project" value="UniProtKB-UniRule"/>
</dbReference>
<dbReference type="Gene3D" id="6.10.250.2070">
    <property type="match status" value="1"/>
</dbReference>
<dbReference type="HAMAP" id="MF_01305">
    <property type="entry name" value="PSII_PsbJ"/>
    <property type="match status" value="1"/>
</dbReference>
<dbReference type="InterPro" id="IPR002682">
    <property type="entry name" value="PSII_PsbJ"/>
</dbReference>
<dbReference type="InterPro" id="IPR037267">
    <property type="entry name" value="PSII_PsbJ_sf"/>
</dbReference>
<dbReference type="NCBIfam" id="NF002722">
    <property type="entry name" value="PRK02565.1"/>
    <property type="match status" value="1"/>
</dbReference>
<dbReference type="PANTHER" id="PTHR34812">
    <property type="entry name" value="PHOTOSYSTEM II REACTION CENTER PROTEIN J"/>
    <property type="match status" value="1"/>
</dbReference>
<dbReference type="PANTHER" id="PTHR34812:SF3">
    <property type="entry name" value="PHOTOSYSTEM II REACTION CENTER PROTEIN J"/>
    <property type="match status" value="1"/>
</dbReference>
<dbReference type="Pfam" id="PF01788">
    <property type="entry name" value="PsbJ"/>
    <property type="match status" value="1"/>
</dbReference>
<dbReference type="SUPFAM" id="SSF161021">
    <property type="entry name" value="Photosystem II reaction center protein J, PsbJ"/>
    <property type="match status" value="1"/>
</dbReference>
<organism>
    <name type="scientific">Draba nemorosa</name>
    <name type="common">Woodland whitlowgrass</name>
    <dbReference type="NCBI Taxonomy" id="171822"/>
    <lineage>
        <taxon>Eukaryota</taxon>
        <taxon>Viridiplantae</taxon>
        <taxon>Streptophyta</taxon>
        <taxon>Embryophyta</taxon>
        <taxon>Tracheophyta</taxon>
        <taxon>Spermatophyta</taxon>
        <taxon>Magnoliopsida</taxon>
        <taxon>eudicotyledons</taxon>
        <taxon>Gunneridae</taxon>
        <taxon>Pentapetalae</taxon>
        <taxon>rosids</taxon>
        <taxon>malvids</taxon>
        <taxon>Brassicales</taxon>
        <taxon>Brassicaceae</taxon>
        <taxon>Arabideae</taxon>
        <taxon>Draba</taxon>
    </lineage>
</organism>
<accession>A4QL33</accession>
<protein>
    <recommendedName>
        <fullName evidence="1">Photosystem II reaction center protein J</fullName>
        <shortName evidence="1">PSII-J</shortName>
    </recommendedName>
</protein>
<gene>
    <name evidence="1" type="primary">psbJ</name>
</gene>
<feature type="chain" id="PRO_0000292252" description="Photosystem II reaction center protein J">
    <location>
        <begin position="1"/>
        <end position="40"/>
    </location>
</feature>
<feature type="transmembrane region" description="Helical" evidence="1">
    <location>
        <begin position="8"/>
        <end position="28"/>
    </location>
</feature>